<comment type="function">
    <text evidence="1">Required for the formation of a threonylcarbamoyl group on adenosine at position 37 (t(6)A37) in tRNAs that read codons beginning with adenine. Is involved in the transfer of the threonylcarbamoyl moiety of threonylcarbamoyl-AMP (TC-AMP) to the N6 group of A37, together with TsaE and TsaB. TsaD likely plays a direct catalytic role in this reaction.</text>
</comment>
<comment type="catalytic activity">
    <reaction evidence="1">
        <text>L-threonylcarbamoyladenylate + adenosine(37) in tRNA = N(6)-L-threonylcarbamoyladenosine(37) in tRNA + AMP + H(+)</text>
        <dbReference type="Rhea" id="RHEA:37059"/>
        <dbReference type="Rhea" id="RHEA-COMP:10162"/>
        <dbReference type="Rhea" id="RHEA-COMP:10163"/>
        <dbReference type="ChEBI" id="CHEBI:15378"/>
        <dbReference type="ChEBI" id="CHEBI:73682"/>
        <dbReference type="ChEBI" id="CHEBI:74411"/>
        <dbReference type="ChEBI" id="CHEBI:74418"/>
        <dbReference type="ChEBI" id="CHEBI:456215"/>
        <dbReference type="EC" id="2.3.1.234"/>
    </reaction>
</comment>
<comment type="cofactor">
    <cofactor evidence="1">
        <name>Fe(2+)</name>
        <dbReference type="ChEBI" id="CHEBI:29033"/>
    </cofactor>
    <text evidence="1">Binds 1 Fe(2+) ion per subunit.</text>
</comment>
<comment type="subcellular location">
    <subcellularLocation>
        <location evidence="1">Cytoplasm</location>
    </subcellularLocation>
</comment>
<comment type="similarity">
    <text evidence="1">Belongs to the KAE1 / TsaD family.</text>
</comment>
<reference key="1">
    <citation type="submission" date="2005-08" db="EMBL/GenBank/DDBJ databases">
        <title>Complete sequence of Chlorobium chlorochromatii CaD3.</title>
        <authorList>
            <consortium name="US DOE Joint Genome Institute"/>
            <person name="Copeland A."/>
            <person name="Lucas S."/>
            <person name="Lapidus A."/>
            <person name="Barry K."/>
            <person name="Detter J.C."/>
            <person name="Glavina T."/>
            <person name="Hammon N."/>
            <person name="Israni S."/>
            <person name="Pitluck S."/>
            <person name="Bryant D."/>
            <person name="Schmutz J."/>
            <person name="Larimer F."/>
            <person name="Land M."/>
            <person name="Kyrpides N."/>
            <person name="Ivanova N."/>
            <person name="Richardson P."/>
        </authorList>
    </citation>
    <scope>NUCLEOTIDE SEQUENCE [LARGE SCALE GENOMIC DNA]</scope>
    <source>
        <strain>CaD3</strain>
    </source>
</reference>
<dbReference type="EC" id="2.3.1.234" evidence="1"/>
<dbReference type="EMBL" id="CP000108">
    <property type="protein sequence ID" value="ABB27387.1"/>
    <property type="molecule type" value="Genomic_DNA"/>
</dbReference>
<dbReference type="SMR" id="Q3ANQ6"/>
<dbReference type="STRING" id="340177.Cag_0109"/>
<dbReference type="KEGG" id="cch:Cag_0109"/>
<dbReference type="eggNOG" id="COG0533">
    <property type="taxonomic scope" value="Bacteria"/>
</dbReference>
<dbReference type="HOGENOM" id="CLU_023208_0_2_10"/>
<dbReference type="OrthoDB" id="9806197at2"/>
<dbReference type="GO" id="GO:0005737">
    <property type="term" value="C:cytoplasm"/>
    <property type="evidence" value="ECO:0007669"/>
    <property type="project" value="UniProtKB-SubCell"/>
</dbReference>
<dbReference type="GO" id="GO:0005506">
    <property type="term" value="F:iron ion binding"/>
    <property type="evidence" value="ECO:0007669"/>
    <property type="project" value="UniProtKB-UniRule"/>
</dbReference>
<dbReference type="GO" id="GO:0061711">
    <property type="term" value="F:N(6)-L-threonylcarbamoyladenine synthase activity"/>
    <property type="evidence" value="ECO:0007669"/>
    <property type="project" value="UniProtKB-EC"/>
</dbReference>
<dbReference type="GO" id="GO:0002949">
    <property type="term" value="P:tRNA threonylcarbamoyladenosine modification"/>
    <property type="evidence" value="ECO:0007669"/>
    <property type="project" value="UniProtKB-UniRule"/>
</dbReference>
<dbReference type="CDD" id="cd24133">
    <property type="entry name" value="ASKHA_NBD_TsaD_bac"/>
    <property type="match status" value="1"/>
</dbReference>
<dbReference type="FunFam" id="3.30.420.40:FF:000012">
    <property type="entry name" value="tRNA N6-adenosine threonylcarbamoyltransferase"/>
    <property type="match status" value="1"/>
</dbReference>
<dbReference type="FunFam" id="3.30.420.40:FF:000040">
    <property type="entry name" value="tRNA N6-adenosine threonylcarbamoyltransferase"/>
    <property type="match status" value="1"/>
</dbReference>
<dbReference type="Gene3D" id="3.30.420.40">
    <property type="match status" value="2"/>
</dbReference>
<dbReference type="HAMAP" id="MF_01445">
    <property type="entry name" value="TsaD"/>
    <property type="match status" value="1"/>
</dbReference>
<dbReference type="InterPro" id="IPR043129">
    <property type="entry name" value="ATPase_NBD"/>
</dbReference>
<dbReference type="InterPro" id="IPR000905">
    <property type="entry name" value="Gcp-like_dom"/>
</dbReference>
<dbReference type="InterPro" id="IPR017861">
    <property type="entry name" value="KAE1/TsaD"/>
</dbReference>
<dbReference type="InterPro" id="IPR022450">
    <property type="entry name" value="TsaD"/>
</dbReference>
<dbReference type="NCBIfam" id="TIGR00329">
    <property type="entry name" value="gcp_kae1"/>
    <property type="match status" value="1"/>
</dbReference>
<dbReference type="NCBIfam" id="TIGR03723">
    <property type="entry name" value="T6A_TsaD_YgjD"/>
    <property type="match status" value="1"/>
</dbReference>
<dbReference type="PANTHER" id="PTHR11735">
    <property type="entry name" value="TRNA N6-ADENOSINE THREONYLCARBAMOYLTRANSFERASE"/>
    <property type="match status" value="1"/>
</dbReference>
<dbReference type="PANTHER" id="PTHR11735:SF6">
    <property type="entry name" value="TRNA N6-ADENOSINE THREONYLCARBAMOYLTRANSFERASE, MITOCHONDRIAL"/>
    <property type="match status" value="1"/>
</dbReference>
<dbReference type="Pfam" id="PF00814">
    <property type="entry name" value="TsaD"/>
    <property type="match status" value="1"/>
</dbReference>
<dbReference type="PRINTS" id="PR00789">
    <property type="entry name" value="OSIALOPTASE"/>
</dbReference>
<dbReference type="SUPFAM" id="SSF53067">
    <property type="entry name" value="Actin-like ATPase domain"/>
    <property type="match status" value="2"/>
</dbReference>
<feature type="chain" id="PRO_0000303322" description="tRNA N6-adenosine threonylcarbamoyltransferase">
    <location>
        <begin position="1"/>
        <end position="350"/>
    </location>
</feature>
<feature type="binding site" evidence="1">
    <location>
        <position position="109"/>
    </location>
    <ligand>
        <name>Fe cation</name>
        <dbReference type="ChEBI" id="CHEBI:24875"/>
    </ligand>
</feature>
<feature type="binding site" evidence="1">
    <location>
        <position position="113"/>
    </location>
    <ligand>
        <name>Fe cation</name>
        <dbReference type="ChEBI" id="CHEBI:24875"/>
    </ligand>
</feature>
<feature type="binding site" evidence="1">
    <location>
        <begin position="136"/>
        <end position="140"/>
    </location>
    <ligand>
        <name>substrate</name>
    </ligand>
</feature>
<feature type="binding site" evidence="1">
    <location>
        <position position="169"/>
    </location>
    <ligand>
        <name>substrate</name>
    </ligand>
</feature>
<feature type="binding site" evidence="1">
    <location>
        <position position="182"/>
    </location>
    <ligand>
        <name>substrate</name>
    </ligand>
</feature>
<feature type="binding site" evidence="1">
    <location>
        <position position="186"/>
    </location>
    <ligand>
        <name>substrate</name>
    </ligand>
</feature>
<feature type="binding site" evidence="1">
    <location>
        <position position="284"/>
    </location>
    <ligand>
        <name>substrate</name>
    </ligand>
</feature>
<feature type="binding site" evidence="1">
    <location>
        <position position="312"/>
    </location>
    <ligand>
        <name>Fe cation</name>
        <dbReference type="ChEBI" id="CHEBI:24875"/>
    </ligand>
</feature>
<sequence length="350" mass="37050">MIILGIETSCDETSASVLHNGVVLSNIVSSQHCHTSFGGVVPELASREHERLITAITETAINEANIQKDALDVIAATAGPGLIGAIMVGLCFAQGMACALNIPFVPINHIEAHIFSPFINSGANSPLPKEGYISLTVSGGHTLLALVKPDLSYTIVGKTLDDAAGEAFDKTGKMIGLPYPAGPVIDKLAENGNPNFYHFPRALTSRSKSRKSWEGNLDFSFSGMKTSVLTWLQQQSPESVASNLPDIAASIQAAIVDVLVEKSIAAAKHYNVSTIAIAGGVSANRGLRSSMQAACQQHGITLCLPETIYSTDNAAMIASIAALKLSHGMEPLYRYNVAPYASFLHKDNFS</sequence>
<protein>
    <recommendedName>
        <fullName evidence="1">tRNA N6-adenosine threonylcarbamoyltransferase</fullName>
        <ecNumber evidence="1">2.3.1.234</ecNumber>
    </recommendedName>
    <alternativeName>
        <fullName evidence="1">N6-L-threonylcarbamoyladenine synthase</fullName>
        <shortName evidence="1">t(6)A synthase</shortName>
    </alternativeName>
    <alternativeName>
        <fullName evidence="1">t(6)A37 threonylcarbamoyladenosine biosynthesis protein TsaD</fullName>
    </alternativeName>
    <alternativeName>
        <fullName evidence="1">tRNA threonylcarbamoyladenosine biosynthesis protein TsaD</fullName>
    </alternativeName>
</protein>
<proteinExistence type="inferred from homology"/>
<accession>Q3ANQ6</accession>
<evidence type="ECO:0000255" key="1">
    <source>
        <dbReference type="HAMAP-Rule" id="MF_01445"/>
    </source>
</evidence>
<name>TSAD_CHLCH</name>
<gene>
    <name evidence="1" type="primary">tsaD</name>
    <name type="synonym">gcp</name>
    <name type="ordered locus">Cag_0109</name>
</gene>
<keyword id="KW-0012">Acyltransferase</keyword>
<keyword id="KW-0963">Cytoplasm</keyword>
<keyword id="KW-0408">Iron</keyword>
<keyword id="KW-0479">Metal-binding</keyword>
<keyword id="KW-0808">Transferase</keyword>
<keyword id="KW-0819">tRNA processing</keyword>
<organism>
    <name type="scientific">Chlorobium chlorochromatii (strain CaD3)</name>
    <dbReference type="NCBI Taxonomy" id="340177"/>
    <lineage>
        <taxon>Bacteria</taxon>
        <taxon>Pseudomonadati</taxon>
        <taxon>Chlorobiota</taxon>
        <taxon>Chlorobiia</taxon>
        <taxon>Chlorobiales</taxon>
        <taxon>Chlorobiaceae</taxon>
        <taxon>Chlorobium/Pelodictyon group</taxon>
        <taxon>Chlorobium</taxon>
    </lineage>
</organism>